<reference key="1">
    <citation type="journal article" date="1997" name="J. Biol. Chem.">
        <title>Early expression of a novel nucleotide receptor in the neural plate of Xenopus embryos.</title>
        <authorList>
            <person name="Bogdanov Y.D."/>
            <person name="Dale L."/>
            <person name="King B.F."/>
            <person name="Whittock N."/>
            <person name="Burnstock G."/>
        </authorList>
    </citation>
    <scope>NUCLEOTIDE SEQUENCE [MRNA]</scope>
    <source>
        <tissue>Neural plate</tissue>
    </source>
</reference>
<evidence type="ECO:0000255" key="1"/>
<evidence type="ECO:0000255" key="2">
    <source>
        <dbReference type="PROSITE-ProRule" id="PRU00521"/>
    </source>
</evidence>
<evidence type="ECO:0000256" key="3">
    <source>
        <dbReference type="SAM" id="MobiDB-lite"/>
    </source>
</evidence>
<organism>
    <name type="scientific">Xenopus laevis</name>
    <name type="common">African clawed frog</name>
    <dbReference type="NCBI Taxonomy" id="8355"/>
    <lineage>
        <taxon>Eukaryota</taxon>
        <taxon>Metazoa</taxon>
        <taxon>Chordata</taxon>
        <taxon>Craniata</taxon>
        <taxon>Vertebrata</taxon>
        <taxon>Euteleostomi</taxon>
        <taxon>Amphibia</taxon>
        <taxon>Batrachia</taxon>
        <taxon>Anura</taxon>
        <taxon>Pipoidea</taxon>
        <taxon>Pipidae</taxon>
        <taxon>Xenopodinae</taxon>
        <taxon>Xenopus</taxon>
        <taxon>Xenopus</taxon>
    </lineage>
</organism>
<accession>P79928</accession>
<keyword id="KW-1003">Cell membrane</keyword>
<keyword id="KW-1015">Disulfide bond</keyword>
<keyword id="KW-0297">G-protein coupled receptor</keyword>
<keyword id="KW-0325">Glycoprotein</keyword>
<keyword id="KW-0472">Membrane</keyword>
<keyword id="KW-0675">Receptor</keyword>
<keyword id="KW-1185">Reference proteome</keyword>
<keyword id="KW-0807">Transducer</keyword>
<keyword id="KW-0812">Transmembrane</keyword>
<keyword id="KW-1133">Transmembrane helix</keyword>
<dbReference type="EMBL" id="X99953">
    <property type="protein sequence ID" value="CAA68213.1"/>
    <property type="molecule type" value="mRNA"/>
</dbReference>
<dbReference type="SMR" id="P79928"/>
<dbReference type="GlyCosmos" id="P79928">
    <property type="glycosylation" value="2 sites, No reported glycans"/>
</dbReference>
<dbReference type="AGR" id="Xenbase:XB-GENE-943452"/>
<dbReference type="Xenbase" id="XB-GENE-943452">
    <property type="gene designation" value="p2ry4.L"/>
</dbReference>
<dbReference type="Proteomes" id="UP000186698">
    <property type="component" value="Unplaced"/>
</dbReference>
<dbReference type="GO" id="GO:0005886">
    <property type="term" value="C:plasma membrane"/>
    <property type="evidence" value="ECO:0000318"/>
    <property type="project" value="GO_Central"/>
</dbReference>
<dbReference type="GO" id="GO:0045028">
    <property type="term" value="F:G protein-coupled purinergic nucleotide receptor activity"/>
    <property type="evidence" value="ECO:0007669"/>
    <property type="project" value="InterPro"/>
</dbReference>
<dbReference type="GO" id="GO:0045030">
    <property type="term" value="F:G protein-coupled UTP receptor activity"/>
    <property type="evidence" value="ECO:0000318"/>
    <property type="project" value="GO_Central"/>
</dbReference>
<dbReference type="GO" id="GO:0007186">
    <property type="term" value="P:G protein-coupled receptor signaling pathway"/>
    <property type="evidence" value="ECO:0000318"/>
    <property type="project" value="GO_Central"/>
</dbReference>
<dbReference type="GO" id="GO:0060322">
    <property type="term" value="P:head development"/>
    <property type="evidence" value="ECO:0000315"/>
    <property type="project" value="Xenbase"/>
</dbReference>
<dbReference type="GO" id="GO:0007509">
    <property type="term" value="P:mesoderm migration involved in gastrulation"/>
    <property type="evidence" value="ECO:0000315"/>
    <property type="project" value="Xenbase"/>
</dbReference>
<dbReference type="GO" id="GO:0030321">
    <property type="term" value="P:transepithelial chloride transport"/>
    <property type="evidence" value="ECO:0007669"/>
    <property type="project" value="InterPro"/>
</dbReference>
<dbReference type="CDD" id="cd15374">
    <property type="entry name" value="7tmA_P2Y4"/>
    <property type="match status" value="1"/>
</dbReference>
<dbReference type="FunFam" id="1.20.1070.10:FF:000017">
    <property type="entry name" value="lysophosphatidic acid receptor 4"/>
    <property type="match status" value="1"/>
</dbReference>
<dbReference type="Gene3D" id="1.20.1070.10">
    <property type="entry name" value="Rhodopsin 7-helix transmembrane proteins"/>
    <property type="match status" value="1"/>
</dbReference>
<dbReference type="InterPro" id="IPR000276">
    <property type="entry name" value="GPCR_Rhodpsn"/>
</dbReference>
<dbReference type="InterPro" id="IPR017452">
    <property type="entry name" value="GPCR_Rhodpsn_7TM"/>
</dbReference>
<dbReference type="InterPro" id="IPR000018">
    <property type="entry name" value="P2Y4"/>
</dbReference>
<dbReference type="PANTHER" id="PTHR24231:SF21">
    <property type="entry name" value="P2Y PURINOCEPTOR 4"/>
    <property type="match status" value="1"/>
</dbReference>
<dbReference type="PANTHER" id="PTHR24231">
    <property type="entry name" value="PURINOCEPTOR-RELATED G-PROTEIN COUPLED RECEPTOR"/>
    <property type="match status" value="1"/>
</dbReference>
<dbReference type="Pfam" id="PF00001">
    <property type="entry name" value="7tm_1"/>
    <property type="match status" value="1"/>
</dbReference>
<dbReference type="PRINTS" id="PR00237">
    <property type="entry name" value="GPCRRHODOPSN"/>
</dbReference>
<dbReference type="PRINTS" id="PR01066">
    <property type="entry name" value="P2Y4PRNOCPTR"/>
</dbReference>
<dbReference type="PRINTS" id="PR01157">
    <property type="entry name" value="P2YPURNOCPTR"/>
</dbReference>
<dbReference type="SUPFAM" id="SSF81321">
    <property type="entry name" value="Family A G protein-coupled receptor-like"/>
    <property type="match status" value="1"/>
</dbReference>
<dbReference type="PROSITE" id="PS00237">
    <property type="entry name" value="G_PROTEIN_RECEP_F1_1"/>
    <property type="match status" value="1"/>
</dbReference>
<dbReference type="PROSITE" id="PS50262">
    <property type="entry name" value="G_PROTEIN_RECEP_F1_2"/>
    <property type="match status" value="1"/>
</dbReference>
<proteinExistence type="evidence at transcript level"/>
<sequence length="537" mass="62024">MTEDIMATSYPTFLTTPYLPMKLLMNLTNDTEDICVFDEGFKFLLLPVSYSAVFMVGLPLNIAAMWIFIAKMRPWNPTTVYMFNLALSDTLYVLSLPTLVYYYADKNNWPFGEVLCKLVRFLFYANLYSSILFLTCISVHRYRGVCHPITSLRRMNAKHAYVICALVWLSVTLCLVPNLIFVTVSPKVKNTICHDTTRPEDFARYVEYSTAIMCLLFGIPCLIIAGCYGLMTRELMKPIVSGNQQTLPSYKKRSIKTIIFVMIAFAICFMPFHITRTLYYYARLLGIKCYALNVINVTYKVTRPLASANSCIDPILYFLANDRYRRRLIRTVRRRSSVPNRRCMHTNHPQTEPHMTAGPLPVISAEEIPSNGSMVRDENGEGSREHRVEWTDTKEINQMMNRRSTIKRNSTDKNDMKENRHGENYLPYVEVVEKEDYETKRENRKTTEQSSKTNAEQDELQTQIDSRLKRGKWQLSSKKGAAQENEKGHMEPSFEGEGTSTWNLLTPKMYGKKDRLAKNVEEVGYGKEKELQNFPKA</sequence>
<feature type="chain" id="PRO_0000070024" description="P2Y purinoceptor 4">
    <location>
        <begin position="1"/>
        <end position="537"/>
    </location>
</feature>
<feature type="topological domain" description="Extracellular" evidence="1">
    <location>
        <begin position="1"/>
        <end position="49"/>
    </location>
</feature>
<feature type="transmembrane region" description="Helical; Name=1" evidence="1">
    <location>
        <begin position="50"/>
        <end position="70"/>
    </location>
</feature>
<feature type="topological domain" description="Cytoplasmic" evidence="1">
    <location>
        <begin position="71"/>
        <end position="79"/>
    </location>
</feature>
<feature type="transmembrane region" description="Helical; Name=2" evidence="1">
    <location>
        <begin position="80"/>
        <end position="100"/>
    </location>
</feature>
<feature type="topological domain" description="Extracellular" evidence="1">
    <location>
        <begin position="101"/>
        <end position="118"/>
    </location>
</feature>
<feature type="transmembrane region" description="Helical; Name=3" evidence="1">
    <location>
        <begin position="119"/>
        <end position="139"/>
    </location>
</feature>
<feature type="topological domain" description="Cytoplasmic" evidence="1">
    <location>
        <begin position="140"/>
        <end position="161"/>
    </location>
</feature>
<feature type="transmembrane region" description="Helical; Name=4" evidence="1">
    <location>
        <begin position="162"/>
        <end position="182"/>
    </location>
</feature>
<feature type="topological domain" description="Extracellular" evidence="1">
    <location>
        <begin position="183"/>
        <end position="210"/>
    </location>
</feature>
<feature type="transmembrane region" description="Helical; Name=5" evidence="1">
    <location>
        <begin position="211"/>
        <end position="231"/>
    </location>
</feature>
<feature type="topological domain" description="Cytoplasmic" evidence="1">
    <location>
        <begin position="232"/>
        <end position="254"/>
    </location>
</feature>
<feature type="transmembrane region" description="Helical; Name=6" evidence="1">
    <location>
        <begin position="255"/>
        <end position="275"/>
    </location>
</feature>
<feature type="topological domain" description="Extracellular" evidence="1">
    <location>
        <begin position="276"/>
        <end position="292"/>
    </location>
</feature>
<feature type="transmembrane region" description="Helical; Name=7" evidence="1">
    <location>
        <begin position="293"/>
        <end position="316"/>
    </location>
</feature>
<feature type="topological domain" description="Cytoplasmic" evidence="1">
    <location>
        <begin position="317"/>
        <end position="537"/>
    </location>
</feature>
<feature type="region of interest" description="Disordered" evidence="3">
    <location>
        <begin position="401"/>
        <end position="505"/>
    </location>
</feature>
<feature type="compositionally biased region" description="Basic and acidic residues" evidence="3">
    <location>
        <begin position="409"/>
        <end position="423"/>
    </location>
</feature>
<feature type="compositionally biased region" description="Basic and acidic residues" evidence="3">
    <location>
        <begin position="431"/>
        <end position="447"/>
    </location>
</feature>
<feature type="compositionally biased region" description="Polar residues" evidence="3">
    <location>
        <begin position="448"/>
        <end position="465"/>
    </location>
</feature>
<feature type="glycosylation site" description="N-linked (GlcNAc...) asparagine" evidence="1">
    <location>
        <position position="26"/>
    </location>
</feature>
<feature type="glycosylation site" description="N-linked (GlcNAc...) asparagine" evidence="1">
    <location>
        <position position="29"/>
    </location>
</feature>
<feature type="disulfide bond" evidence="2">
    <location>
        <begin position="116"/>
        <end position="193"/>
    </location>
</feature>
<gene>
    <name type="primary">p2ry4</name>
    <name type="synonym">p2ry8</name>
</gene>
<comment type="function">
    <text>Receptor for extracellular ATP, UTP, CTP, GTP and ITP. The activity of this receptor is mediated by G proteins which activate a phosphatidylinositol-calcium second messenger system. May play a key role in the early development of neural tissue.</text>
</comment>
<comment type="subcellular location">
    <subcellularLocation>
        <location>Cell membrane</location>
        <topology>Multi-pass membrane protein</topology>
    </subcellularLocation>
</comment>
<comment type="similarity">
    <text evidence="2">Belongs to the G-protein coupled receptor 1 family.</text>
</comment>
<protein>
    <recommendedName>
        <fullName>P2Y purinoceptor 4</fullName>
        <shortName>P2Y4</shortName>
    </recommendedName>
    <alternativeName>
        <fullName>P2Y purinoceptor 8</fullName>
        <shortName>P2Y8</shortName>
    </alternativeName>
</protein>
<name>P2RY4_XENLA</name>